<gene>
    <name evidence="1" type="primary">pnp</name>
    <name type="ordered locus">R00244</name>
    <name type="ORF">SMc00324</name>
</gene>
<reference key="1">
    <citation type="journal article" date="2001" name="Proc. Natl. Acad. Sci. U.S.A.">
        <title>Analysis of the chromosome sequence of the legume symbiont Sinorhizobium meliloti strain 1021.</title>
        <authorList>
            <person name="Capela D."/>
            <person name="Barloy-Hubler F."/>
            <person name="Gouzy J."/>
            <person name="Bothe G."/>
            <person name="Ampe F."/>
            <person name="Batut J."/>
            <person name="Boistard P."/>
            <person name="Becker A."/>
            <person name="Boutry M."/>
            <person name="Cadieu E."/>
            <person name="Dreano S."/>
            <person name="Gloux S."/>
            <person name="Godrie T."/>
            <person name="Goffeau A."/>
            <person name="Kahn D."/>
            <person name="Kiss E."/>
            <person name="Lelaure V."/>
            <person name="Masuy D."/>
            <person name="Pohl T."/>
            <person name="Portetelle D."/>
            <person name="Puehler A."/>
            <person name="Purnelle B."/>
            <person name="Ramsperger U."/>
            <person name="Renard C."/>
            <person name="Thebault P."/>
            <person name="Vandenbol M."/>
            <person name="Weidner S."/>
            <person name="Galibert F."/>
        </authorList>
    </citation>
    <scope>NUCLEOTIDE SEQUENCE [LARGE SCALE GENOMIC DNA]</scope>
    <source>
        <strain>1021</strain>
    </source>
</reference>
<reference key="2">
    <citation type="journal article" date="2001" name="Science">
        <title>The composite genome of the legume symbiont Sinorhizobium meliloti.</title>
        <authorList>
            <person name="Galibert F."/>
            <person name="Finan T.M."/>
            <person name="Long S.R."/>
            <person name="Puehler A."/>
            <person name="Abola P."/>
            <person name="Ampe F."/>
            <person name="Barloy-Hubler F."/>
            <person name="Barnett M.J."/>
            <person name="Becker A."/>
            <person name="Boistard P."/>
            <person name="Bothe G."/>
            <person name="Boutry M."/>
            <person name="Bowser L."/>
            <person name="Buhrmester J."/>
            <person name="Cadieu E."/>
            <person name="Capela D."/>
            <person name="Chain P."/>
            <person name="Cowie A."/>
            <person name="Davis R.W."/>
            <person name="Dreano S."/>
            <person name="Federspiel N.A."/>
            <person name="Fisher R.F."/>
            <person name="Gloux S."/>
            <person name="Godrie T."/>
            <person name="Goffeau A."/>
            <person name="Golding B."/>
            <person name="Gouzy J."/>
            <person name="Gurjal M."/>
            <person name="Hernandez-Lucas I."/>
            <person name="Hong A."/>
            <person name="Huizar L."/>
            <person name="Hyman R.W."/>
            <person name="Jones T."/>
            <person name="Kahn D."/>
            <person name="Kahn M.L."/>
            <person name="Kalman S."/>
            <person name="Keating D.H."/>
            <person name="Kiss E."/>
            <person name="Komp C."/>
            <person name="Lelaure V."/>
            <person name="Masuy D."/>
            <person name="Palm C."/>
            <person name="Peck M.C."/>
            <person name="Pohl T.M."/>
            <person name="Portetelle D."/>
            <person name="Purnelle B."/>
            <person name="Ramsperger U."/>
            <person name="Surzycki R."/>
            <person name="Thebault P."/>
            <person name="Vandenbol M."/>
            <person name="Vorhoelter F.J."/>
            <person name="Weidner S."/>
            <person name="Wells D.H."/>
            <person name="Wong K."/>
            <person name="Yeh K.-C."/>
            <person name="Batut J."/>
        </authorList>
    </citation>
    <scope>NUCLEOTIDE SEQUENCE [LARGE SCALE GENOMIC DNA]</scope>
    <source>
        <strain>1021</strain>
    </source>
</reference>
<dbReference type="EC" id="2.7.7.8" evidence="1"/>
<dbReference type="EMBL" id="AL591688">
    <property type="protein sequence ID" value="CAC41681.1"/>
    <property type="molecule type" value="Genomic_DNA"/>
</dbReference>
<dbReference type="RefSeq" id="NP_384350.1">
    <property type="nucleotide sequence ID" value="NC_003047.1"/>
</dbReference>
<dbReference type="RefSeq" id="WP_010968447.1">
    <property type="nucleotide sequence ID" value="NC_003047.1"/>
</dbReference>
<dbReference type="SMR" id="Q92SW0"/>
<dbReference type="EnsemblBacteria" id="CAC41681">
    <property type="protein sequence ID" value="CAC41681"/>
    <property type="gene ID" value="SMc00324"/>
</dbReference>
<dbReference type="KEGG" id="sme:SMc00324"/>
<dbReference type="PATRIC" id="fig|266834.11.peg.1611"/>
<dbReference type="eggNOG" id="COG1185">
    <property type="taxonomic scope" value="Bacteria"/>
</dbReference>
<dbReference type="HOGENOM" id="CLU_004217_2_2_5"/>
<dbReference type="OrthoDB" id="9804305at2"/>
<dbReference type="Proteomes" id="UP000001976">
    <property type="component" value="Chromosome"/>
</dbReference>
<dbReference type="GO" id="GO:0005829">
    <property type="term" value="C:cytosol"/>
    <property type="evidence" value="ECO:0007669"/>
    <property type="project" value="TreeGrafter"/>
</dbReference>
<dbReference type="GO" id="GO:0000175">
    <property type="term" value="F:3'-5'-RNA exonuclease activity"/>
    <property type="evidence" value="ECO:0007669"/>
    <property type="project" value="TreeGrafter"/>
</dbReference>
<dbReference type="GO" id="GO:0000287">
    <property type="term" value="F:magnesium ion binding"/>
    <property type="evidence" value="ECO:0007669"/>
    <property type="project" value="UniProtKB-UniRule"/>
</dbReference>
<dbReference type="GO" id="GO:0004654">
    <property type="term" value="F:polyribonucleotide nucleotidyltransferase activity"/>
    <property type="evidence" value="ECO:0007669"/>
    <property type="project" value="UniProtKB-UniRule"/>
</dbReference>
<dbReference type="GO" id="GO:0003723">
    <property type="term" value="F:RNA binding"/>
    <property type="evidence" value="ECO:0007669"/>
    <property type="project" value="UniProtKB-UniRule"/>
</dbReference>
<dbReference type="GO" id="GO:0006402">
    <property type="term" value="P:mRNA catabolic process"/>
    <property type="evidence" value="ECO:0007669"/>
    <property type="project" value="UniProtKB-UniRule"/>
</dbReference>
<dbReference type="GO" id="GO:0006396">
    <property type="term" value="P:RNA processing"/>
    <property type="evidence" value="ECO:0007669"/>
    <property type="project" value="InterPro"/>
</dbReference>
<dbReference type="CDD" id="cd02393">
    <property type="entry name" value="KH-I_PNPase"/>
    <property type="match status" value="1"/>
</dbReference>
<dbReference type="CDD" id="cd11363">
    <property type="entry name" value="RNase_PH_PNPase_1"/>
    <property type="match status" value="1"/>
</dbReference>
<dbReference type="CDD" id="cd11364">
    <property type="entry name" value="RNase_PH_PNPase_2"/>
    <property type="match status" value="1"/>
</dbReference>
<dbReference type="CDD" id="cd04472">
    <property type="entry name" value="S1_PNPase"/>
    <property type="match status" value="1"/>
</dbReference>
<dbReference type="FunFam" id="2.40.50.140:FF:000107">
    <property type="entry name" value="Polyribonucleotide nucleotidyltransferase"/>
    <property type="match status" value="1"/>
</dbReference>
<dbReference type="FunFam" id="3.30.1370.10:FF:000001">
    <property type="entry name" value="Polyribonucleotide nucleotidyltransferase"/>
    <property type="match status" value="1"/>
</dbReference>
<dbReference type="FunFam" id="3.30.230.70:FF:000001">
    <property type="entry name" value="Polyribonucleotide nucleotidyltransferase"/>
    <property type="match status" value="1"/>
</dbReference>
<dbReference type="FunFam" id="3.30.230.70:FF:000002">
    <property type="entry name" value="Polyribonucleotide nucleotidyltransferase"/>
    <property type="match status" value="1"/>
</dbReference>
<dbReference type="Gene3D" id="3.30.230.70">
    <property type="entry name" value="GHMP Kinase, N-terminal domain"/>
    <property type="match status" value="2"/>
</dbReference>
<dbReference type="Gene3D" id="3.30.1370.10">
    <property type="entry name" value="K Homology domain, type 1"/>
    <property type="match status" value="1"/>
</dbReference>
<dbReference type="Gene3D" id="2.40.50.140">
    <property type="entry name" value="Nucleic acid-binding proteins"/>
    <property type="match status" value="1"/>
</dbReference>
<dbReference type="HAMAP" id="MF_01595">
    <property type="entry name" value="PNPase"/>
    <property type="match status" value="1"/>
</dbReference>
<dbReference type="InterPro" id="IPR001247">
    <property type="entry name" value="ExoRNase_PH_dom1"/>
</dbReference>
<dbReference type="InterPro" id="IPR015847">
    <property type="entry name" value="ExoRNase_PH_dom2"/>
</dbReference>
<dbReference type="InterPro" id="IPR036345">
    <property type="entry name" value="ExoRNase_PH_dom2_sf"/>
</dbReference>
<dbReference type="InterPro" id="IPR004087">
    <property type="entry name" value="KH_dom"/>
</dbReference>
<dbReference type="InterPro" id="IPR004088">
    <property type="entry name" value="KH_dom_type_1"/>
</dbReference>
<dbReference type="InterPro" id="IPR036612">
    <property type="entry name" value="KH_dom_type_1_sf"/>
</dbReference>
<dbReference type="InterPro" id="IPR012340">
    <property type="entry name" value="NA-bd_OB-fold"/>
</dbReference>
<dbReference type="InterPro" id="IPR012162">
    <property type="entry name" value="PNPase"/>
</dbReference>
<dbReference type="InterPro" id="IPR027408">
    <property type="entry name" value="PNPase/RNase_PH_dom_sf"/>
</dbReference>
<dbReference type="InterPro" id="IPR015848">
    <property type="entry name" value="PNPase_PH_RNA-bd_bac/org-type"/>
</dbReference>
<dbReference type="InterPro" id="IPR020568">
    <property type="entry name" value="Ribosomal_Su5_D2-typ_SF"/>
</dbReference>
<dbReference type="InterPro" id="IPR003029">
    <property type="entry name" value="S1_domain"/>
</dbReference>
<dbReference type="NCBIfam" id="TIGR03591">
    <property type="entry name" value="polynuc_phos"/>
    <property type="match status" value="1"/>
</dbReference>
<dbReference type="NCBIfam" id="NF008805">
    <property type="entry name" value="PRK11824.1"/>
    <property type="match status" value="1"/>
</dbReference>
<dbReference type="PANTHER" id="PTHR11252">
    <property type="entry name" value="POLYRIBONUCLEOTIDE NUCLEOTIDYLTRANSFERASE"/>
    <property type="match status" value="1"/>
</dbReference>
<dbReference type="PANTHER" id="PTHR11252:SF0">
    <property type="entry name" value="POLYRIBONUCLEOTIDE NUCLEOTIDYLTRANSFERASE 1, MITOCHONDRIAL"/>
    <property type="match status" value="1"/>
</dbReference>
<dbReference type="Pfam" id="PF00013">
    <property type="entry name" value="KH_1"/>
    <property type="match status" value="1"/>
</dbReference>
<dbReference type="Pfam" id="PF03726">
    <property type="entry name" value="PNPase"/>
    <property type="match status" value="1"/>
</dbReference>
<dbReference type="Pfam" id="PF01138">
    <property type="entry name" value="RNase_PH"/>
    <property type="match status" value="2"/>
</dbReference>
<dbReference type="Pfam" id="PF03725">
    <property type="entry name" value="RNase_PH_C"/>
    <property type="match status" value="2"/>
</dbReference>
<dbReference type="Pfam" id="PF00575">
    <property type="entry name" value="S1"/>
    <property type="match status" value="1"/>
</dbReference>
<dbReference type="PIRSF" id="PIRSF005499">
    <property type="entry name" value="PNPase"/>
    <property type="match status" value="1"/>
</dbReference>
<dbReference type="SMART" id="SM00322">
    <property type="entry name" value="KH"/>
    <property type="match status" value="1"/>
</dbReference>
<dbReference type="SMART" id="SM00316">
    <property type="entry name" value="S1"/>
    <property type="match status" value="1"/>
</dbReference>
<dbReference type="SUPFAM" id="SSF54791">
    <property type="entry name" value="Eukaryotic type KH-domain (KH-domain type I)"/>
    <property type="match status" value="1"/>
</dbReference>
<dbReference type="SUPFAM" id="SSF50249">
    <property type="entry name" value="Nucleic acid-binding proteins"/>
    <property type="match status" value="1"/>
</dbReference>
<dbReference type="SUPFAM" id="SSF55666">
    <property type="entry name" value="Ribonuclease PH domain 2-like"/>
    <property type="match status" value="2"/>
</dbReference>
<dbReference type="SUPFAM" id="SSF54211">
    <property type="entry name" value="Ribosomal protein S5 domain 2-like"/>
    <property type="match status" value="2"/>
</dbReference>
<dbReference type="PROSITE" id="PS50084">
    <property type="entry name" value="KH_TYPE_1"/>
    <property type="match status" value="1"/>
</dbReference>
<dbReference type="PROSITE" id="PS50126">
    <property type="entry name" value="S1"/>
    <property type="match status" value="1"/>
</dbReference>
<sequence length="717" mass="77642">MFETHKVEIEWAGRPLKLETGKIARQADGAVLATYGETVVLATVVSAKAPKPGQDFFPLTVNYQEKTYAAGKIPGGYFKREGRPSENETLVSRLIDRPIRPLFPDGYKNDTQVIITVMQHDLENNPDVVAMVAASAALTLSGVPFMGPVGGARVGYINGEYVLNPHLDEMDESTLDLVVAGTQEAVLMVESEAKELPEDVMLGAVVFGQKGFQPVIDAVIRLAEVAAKEPREFNPEDHSALENAMLSIAEDELRNAYKITEKAARYAAVDAVKAKVKEHFLPEGVENPAHTAEEIAAVFKHLQAKIVRWNILDTKSRIDGRDLVTVRPIVAEVGILPRTHGSALFTRGETQAIVVATLGTGEDEQYVDSLTGMYKENFMLHYNFPPYSVGETGRMGSPGRREIGHGKLAWRAIHPMLPTAEQFPYTLRVVSEITESNGSSSMATVCGTSLALMDAGVPLAKPVAGIAMGLIKEDDRFAVLSDILGDEDHLGDMDFKVAGTDAGITSLQMDIKIEGITEEIMGVALNQAKGGRLHILGEMAKAISESRGQLGEFAPRIEVMNIPVDKIREVIGSGGKVIREIVEKTGAKINIDDDGTVKIASASAKEIEAARKWIHSIVAEPEVGQVYEGTVVKTADFGAFVNFFGARDGLVHISQLASERVAKTTDVVKEGDKVWVKLMGFDERGKVRLSMKVVDQATGKEVVAEKSEKKDGGEAAE</sequence>
<feature type="chain" id="PRO_0000329802" description="Polyribonucleotide nucleotidyltransferase">
    <location>
        <begin position="1"/>
        <end position="717"/>
    </location>
</feature>
<feature type="domain" description="KH" evidence="1">
    <location>
        <begin position="555"/>
        <end position="614"/>
    </location>
</feature>
<feature type="domain" description="S1 motif" evidence="1">
    <location>
        <begin position="624"/>
        <end position="692"/>
    </location>
</feature>
<feature type="binding site" evidence="1">
    <location>
        <position position="488"/>
    </location>
    <ligand>
        <name>Mg(2+)</name>
        <dbReference type="ChEBI" id="CHEBI:18420"/>
    </ligand>
</feature>
<feature type="binding site" evidence="1">
    <location>
        <position position="494"/>
    </location>
    <ligand>
        <name>Mg(2+)</name>
        <dbReference type="ChEBI" id="CHEBI:18420"/>
    </ligand>
</feature>
<organism>
    <name type="scientific">Rhizobium meliloti (strain 1021)</name>
    <name type="common">Ensifer meliloti</name>
    <name type="synonym">Sinorhizobium meliloti</name>
    <dbReference type="NCBI Taxonomy" id="266834"/>
    <lineage>
        <taxon>Bacteria</taxon>
        <taxon>Pseudomonadati</taxon>
        <taxon>Pseudomonadota</taxon>
        <taxon>Alphaproteobacteria</taxon>
        <taxon>Hyphomicrobiales</taxon>
        <taxon>Rhizobiaceae</taxon>
        <taxon>Sinorhizobium/Ensifer group</taxon>
        <taxon>Sinorhizobium</taxon>
    </lineage>
</organism>
<protein>
    <recommendedName>
        <fullName evidence="1">Polyribonucleotide nucleotidyltransferase</fullName>
        <ecNumber evidence="1">2.7.7.8</ecNumber>
    </recommendedName>
    <alternativeName>
        <fullName evidence="1">Polynucleotide phosphorylase</fullName>
        <shortName evidence="1">PNPase</shortName>
    </alternativeName>
</protein>
<accession>Q92SW0</accession>
<name>PNP_RHIME</name>
<evidence type="ECO:0000255" key="1">
    <source>
        <dbReference type="HAMAP-Rule" id="MF_01595"/>
    </source>
</evidence>
<proteinExistence type="inferred from homology"/>
<comment type="function">
    <text evidence="1">Involved in mRNA degradation. Catalyzes the phosphorolysis of single-stranded polyribonucleotides processively in the 3'- to 5'-direction.</text>
</comment>
<comment type="catalytic activity">
    <reaction evidence="1">
        <text>RNA(n+1) + phosphate = RNA(n) + a ribonucleoside 5'-diphosphate</text>
        <dbReference type="Rhea" id="RHEA:22096"/>
        <dbReference type="Rhea" id="RHEA-COMP:14527"/>
        <dbReference type="Rhea" id="RHEA-COMP:17342"/>
        <dbReference type="ChEBI" id="CHEBI:43474"/>
        <dbReference type="ChEBI" id="CHEBI:57930"/>
        <dbReference type="ChEBI" id="CHEBI:140395"/>
        <dbReference type="EC" id="2.7.7.8"/>
    </reaction>
</comment>
<comment type="cofactor">
    <cofactor evidence="1">
        <name>Mg(2+)</name>
        <dbReference type="ChEBI" id="CHEBI:18420"/>
    </cofactor>
</comment>
<comment type="subcellular location">
    <subcellularLocation>
        <location evidence="1">Cytoplasm</location>
    </subcellularLocation>
</comment>
<comment type="similarity">
    <text evidence="1">Belongs to the polyribonucleotide nucleotidyltransferase family.</text>
</comment>
<keyword id="KW-0963">Cytoplasm</keyword>
<keyword id="KW-0460">Magnesium</keyword>
<keyword id="KW-0479">Metal-binding</keyword>
<keyword id="KW-0548">Nucleotidyltransferase</keyword>
<keyword id="KW-1185">Reference proteome</keyword>
<keyword id="KW-0694">RNA-binding</keyword>
<keyword id="KW-0808">Transferase</keyword>